<dbReference type="EC" id="6.3.4.16" evidence="1"/>
<dbReference type="EC" id="6.3.5.5" evidence="1"/>
<dbReference type="EMBL" id="CP000580">
    <property type="protein sequence ID" value="ABN98192.1"/>
    <property type="molecule type" value="Genomic_DNA"/>
</dbReference>
<dbReference type="SMR" id="A3PZ65"/>
<dbReference type="KEGG" id="mjl:Mjls_2408"/>
<dbReference type="HOGENOM" id="CLU_000513_1_0_11"/>
<dbReference type="BioCyc" id="MSP164757:G1G8C-2427-MONOMER"/>
<dbReference type="UniPathway" id="UPA00068">
    <property type="reaction ID" value="UER00171"/>
</dbReference>
<dbReference type="UniPathway" id="UPA00070">
    <property type="reaction ID" value="UER00115"/>
</dbReference>
<dbReference type="GO" id="GO:0005737">
    <property type="term" value="C:cytoplasm"/>
    <property type="evidence" value="ECO:0007669"/>
    <property type="project" value="TreeGrafter"/>
</dbReference>
<dbReference type="GO" id="GO:0005524">
    <property type="term" value="F:ATP binding"/>
    <property type="evidence" value="ECO:0007669"/>
    <property type="project" value="UniProtKB-UniRule"/>
</dbReference>
<dbReference type="GO" id="GO:0004087">
    <property type="term" value="F:carbamoyl-phosphate synthase (ammonia) activity"/>
    <property type="evidence" value="ECO:0007669"/>
    <property type="project" value="RHEA"/>
</dbReference>
<dbReference type="GO" id="GO:0004088">
    <property type="term" value="F:carbamoyl-phosphate synthase (glutamine-hydrolyzing) activity"/>
    <property type="evidence" value="ECO:0007669"/>
    <property type="project" value="UniProtKB-UniRule"/>
</dbReference>
<dbReference type="GO" id="GO:0046872">
    <property type="term" value="F:metal ion binding"/>
    <property type="evidence" value="ECO:0007669"/>
    <property type="project" value="UniProtKB-KW"/>
</dbReference>
<dbReference type="GO" id="GO:0044205">
    <property type="term" value="P:'de novo' UMP biosynthetic process"/>
    <property type="evidence" value="ECO:0007669"/>
    <property type="project" value="UniProtKB-UniRule"/>
</dbReference>
<dbReference type="GO" id="GO:0006541">
    <property type="term" value="P:glutamine metabolic process"/>
    <property type="evidence" value="ECO:0007669"/>
    <property type="project" value="TreeGrafter"/>
</dbReference>
<dbReference type="GO" id="GO:0006526">
    <property type="term" value="P:L-arginine biosynthetic process"/>
    <property type="evidence" value="ECO:0007669"/>
    <property type="project" value="UniProtKB-UniRule"/>
</dbReference>
<dbReference type="CDD" id="cd01424">
    <property type="entry name" value="MGS_CPS_II"/>
    <property type="match status" value="1"/>
</dbReference>
<dbReference type="FunFam" id="1.10.1030.10:FF:000002">
    <property type="entry name" value="Carbamoyl-phosphate synthase large chain"/>
    <property type="match status" value="1"/>
</dbReference>
<dbReference type="FunFam" id="3.30.1490.20:FF:000001">
    <property type="entry name" value="Carbamoyl-phosphate synthase large chain"/>
    <property type="match status" value="1"/>
</dbReference>
<dbReference type="FunFam" id="3.30.470.20:FF:000007">
    <property type="entry name" value="Carbamoyl-phosphate synthase large chain"/>
    <property type="match status" value="1"/>
</dbReference>
<dbReference type="FunFam" id="3.30.470.20:FF:000014">
    <property type="entry name" value="Carbamoyl-phosphate synthase large chain"/>
    <property type="match status" value="1"/>
</dbReference>
<dbReference type="FunFam" id="3.40.50.20:FF:000001">
    <property type="entry name" value="Carbamoyl-phosphate synthase large chain"/>
    <property type="match status" value="2"/>
</dbReference>
<dbReference type="Gene3D" id="3.40.50.20">
    <property type="match status" value="2"/>
</dbReference>
<dbReference type="Gene3D" id="3.30.1490.20">
    <property type="entry name" value="ATP-grasp fold, A domain"/>
    <property type="match status" value="1"/>
</dbReference>
<dbReference type="Gene3D" id="3.30.470.20">
    <property type="entry name" value="ATP-grasp fold, B domain"/>
    <property type="match status" value="2"/>
</dbReference>
<dbReference type="Gene3D" id="1.10.1030.10">
    <property type="entry name" value="Carbamoyl-phosphate synthetase, large subunit oligomerisation domain"/>
    <property type="match status" value="1"/>
</dbReference>
<dbReference type="Gene3D" id="3.40.50.1380">
    <property type="entry name" value="Methylglyoxal synthase-like domain"/>
    <property type="match status" value="1"/>
</dbReference>
<dbReference type="HAMAP" id="MF_01210_B">
    <property type="entry name" value="CPSase_L_chain_B"/>
    <property type="match status" value="1"/>
</dbReference>
<dbReference type="InterPro" id="IPR011761">
    <property type="entry name" value="ATP-grasp"/>
</dbReference>
<dbReference type="InterPro" id="IPR013815">
    <property type="entry name" value="ATP_grasp_subdomain_1"/>
</dbReference>
<dbReference type="InterPro" id="IPR006275">
    <property type="entry name" value="CarbamoylP_synth_lsu"/>
</dbReference>
<dbReference type="InterPro" id="IPR005480">
    <property type="entry name" value="CarbamoylP_synth_lsu_oligo"/>
</dbReference>
<dbReference type="InterPro" id="IPR036897">
    <property type="entry name" value="CarbamoylP_synth_lsu_oligo_sf"/>
</dbReference>
<dbReference type="InterPro" id="IPR005479">
    <property type="entry name" value="CbamoylP_synth_lsu-like_ATP-bd"/>
</dbReference>
<dbReference type="InterPro" id="IPR005483">
    <property type="entry name" value="CbamoylP_synth_lsu_CPSase_dom"/>
</dbReference>
<dbReference type="InterPro" id="IPR011607">
    <property type="entry name" value="MGS-like_dom"/>
</dbReference>
<dbReference type="InterPro" id="IPR036914">
    <property type="entry name" value="MGS-like_dom_sf"/>
</dbReference>
<dbReference type="InterPro" id="IPR033937">
    <property type="entry name" value="MGS_CPS_CarB"/>
</dbReference>
<dbReference type="InterPro" id="IPR016185">
    <property type="entry name" value="PreATP-grasp_dom_sf"/>
</dbReference>
<dbReference type="NCBIfam" id="TIGR01369">
    <property type="entry name" value="CPSaseII_lrg"/>
    <property type="match status" value="1"/>
</dbReference>
<dbReference type="NCBIfam" id="NF003671">
    <property type="entry name" value="PRK05294.1"/>
    <property type="match status" value="1"/>
</dbReference>
<dbReference type="NCBIfam" id="NF009455">
    <property type="entry name" value="PRK12815.1"/>
    <property type="match status" value="1"/>
</dbReference>
<dbReference type="PANTHER" id="PTHR11405:SF53">
    <property type="entry name" value="CARBAMOYL-PHOSPHATE SYNTHASE [AMMONIA], MITOCHONDRIAL"/>
    <property type="match status" value="1"/>
</dbReference>
<dbReference type="PANTHER" id="PTHR11405">
    <property type="entry name" value="CARBAMOYLTRANSFERASE FAMILY MEMBER"/>
    <property type="match status" value="1"/>
</dbReference>
<dbReference type="Pfam" id="PF02786">
    <property type="entry name" value="CPSase_L_D2"/>
    <property type="match status" value="2"/>
</dbReference>
<dbReference type="Pfam" id="PF02787">
    <property type="entry name" value="CPSase_L_D3"/>
    <property type="match status" value="1"/>
</dbReference>
<dbReference type="Pfam" id="PF02142">
    <property type="entry name" value="MGS"/>
    <property type="match status" value="1"/>
</dbReference>
<dbReference type="PRINTS" id="PR00098">
    <property type="entry name" value="CPSASE"/>
</dbReference>
<dbReference type="SMART" id="SM01096">
    <property type="entry name" value="CPSase_L_D3"/>
    <property type="match status" value="1"/>
</dbReference>
<dbReference type="SMART" id="SM00851">
    <property type="entry name" value="MGS"/>
    <property type="match status" value="1"/>
</dbReference>
<dbReference type="SUPFAM" id="SSF48108">
    <property type="entry name" value="Carbamoyl phosphate synthetase, large subunit connection domain"/>
    <property type="match status" value="1"/>
</dbReference>
<dbReference type="SUPFAM" id="SSF56059">
    <property type="entry name" value="Glutathione synthetase ATP-binding domain-like"/>
    <property type="match status" value="2"/>
</dbReference>
<dbReference type="SUPFAM" id="SSF52335">
    <property type="entry name" value="Methylglyoxal synthase-like"/>
    <property type="match status" value="1"/>
</dbReference>
<dbReference type="SUPFAM" id="SSF52440">
    <property type="entry name" value="PreATP-grasp domain"/>
    <property type="match status" value="2"/>
</dbReference>
<dbReference type="PROSITE" id="PS50975">
    <property type="entry name" value="ATP_GRASP"/>
    <property type="match status" value="2"/>
</dbReference>
<dbReference type="PROSITE" id="PS00866">
    <property type="entry name" value="CPSASE_1"/>
    <property type="match status" value="1"/>
</dbReference>
<dbReference type="PROSITE" id="PS00867">
    <property type="entry name" value="CPSASE_2"/>
    <property type="match status" value="2"/>
</dbReference>
<dbReference type="PROSITE" id="PS51855">
    <property type="entry name" value="MGS"/>
    <property type="match status" value="1"/>
</dbReference>
<reference key="1">
    <citation type="submission" date="2007-02" db="EMBL/GenBank/DDBJ databases">
        <title>Complete sequence of Mycobacterium sp. JLS.</title>
        <authorList>
            <consortium name="US DOE Joint Genome Institute"/>
            <person name="Copeland A."/>
            <person name="Lucas S."/>
            <person name="Lapidus A."/>
            <person name="Barry K."/>
            <person name="Detter J.C."/>
            <person name="Glavina del Rio T."/>
            <person name="Hammon N."/>
            <person name="Israni S."/>
            <person name="Dalin E."/>
            <person name="Tice H."/>
            <person name="Pitluck S."/>
            <person name="Chain P."/>
            <person name="Malfatti S."/>
            <person name="Shin M."/>
            <person name="Vergez L."/>
            <person name="Schmutz J."/>
            <person name="Larimer F."/>
            <person name="Land M."/>
            <person name="Hauser L."/>
            <person name="Kyrpides N."/>
            <person name="Mikhailova N."/>
            <person name="Miller C.D."/>
            <person name="Anderson A.J."/>
            <person name="Sims R.C."/>
            <person name="Richardson P."/>
        </authorList>
    </citation>
    <scope>NUCLEOTIDE SEQUENCE [LARGE SCALE GENOMIC DNA]</scope>
    <source>
        <strain>JLS</strain>
    </source>
</reference>
<gene>
    <name evidence="1" type="primary">carB</name>
    <name type="ordered locus">Mjls_2408</name>
</gene>
<proteinExistence type="inferred from homology"/>
<accession>A3PZ65</accession>
<feature type="chain" id="PRO_1000066369" description="Carbamoyl phosphate synthase large chain">
    <location>
        <begin position="1"/>
        <end position="1112"/>
    </location>
</feature>
<feature type="domain" description="ATP-grasp 1" evidence="1">
    <location>
        <begin position="138"/>
        <end position="333"/>
    </location>
</feature>
<feature type="domain" description="ATP-grasp 2" evidence="1">
    <location>
        <begin position="693"/>
        <end position="884"/>
    </location>
</feature>
<feature type="domain" description="MGS-like" evidence="1">
    <location>
        <begin position="966"/>
        <end position="1112"/>
    </location>
</feature>
<feature type="region of interest" description="Carboxyphosphate synthetic domain" evidence="1">
    <location>
        <begin position="1"/>
        <end position="407"/>
    </location>
</feature>
<feature type="region of interest" description="Oligomerization domain" evidence="1">
    <location>
        <begin position="408"/>
        <end position="559"/>
    </location>
</feature>
<feature type="region of interest" description="Carbamoyl phosphate synthetic domain" evidence="1">
    <location>
        <begin position="560"/>
        <end position="965"/>
    </location>
</feature>
<feature type="region of interest" description="Allosteric domain" evidence="1">
    <location>
        <begin position="966"/>
        <end position="1112"/>
    </location>
</feature>
<feature type="binding site" evidence="1">
    <location>
        <position position="134"/>
    </location>
    <ligand>
        <name>ATP</name>
        <dbReference type="ChEBI" id="CHEBI:30616"/>
        <label>1</label>
    </ligand>
</feature>
<feature type="binding site" evidence="1">
    <location>
        <position position="174"/>
    </location>
    <ligand>
        <name>ATP</name>
        <dbReference type="ChEBI" id="CHEBI:30616"/>
        <label>1</label>
    </ligand>
</feature>
<feature type="binding site" evidence="1">
    <location>
        <position position="180"/>
    </location>
    <ligand>
        <name>ATP</name>
        <dbReference type="ChEBI" id="CHEBI:30616"/>
        <label>1</label>
    </ligand>
</feature>
<feature type="binding site" evidence="1">
    <location>
        <position position="181"/>
    </location>
    <ligand>
        <name>ATP</name>
        <dbReference type="ChEBI" id="CHEBI:30616"/>
        <label>1</label>
    </ligand>
</feature>
<feature type="binding site" evidence="1">
    <location>
        <position position="213"/>
    </location>
    <ligand>
        <name>ATP</name>
        <dbReference type="ChEBI" id="CHEBI:30616"/>
        <label>1</label>
    </ligand>
</feature>
<feature type="binding site" evidence="1">
    <location>
        <position position="215"/>
    </location>
    <ligand>
        <name>ATP</name>
        <dbReference type="ChEBI" id="CHEBI:30616"/>
        <label>1</label>
    </ligand>
</feature>
<feature type="binding site" evidence="1">
    <location>
        <position position="220"/>
    </location>
    <ligand>
        <name>ATP</name>
        <dbReference type="ChEBI" id="CHEBI:30616"/>
        <label>1</label>
    </ligand>
</feature>
<feature type="binding site" evidence="1">
    <location>
        <position position="246"/>
    </location>
    <ligand>
        <name>ATP</name>
        <dbReference type="ChEBI" id="CHEBI:30616"/>
        <label>1</label>
    </ligand>
</feature>
<feature type="binding site" evidence="1">
    <location>
        <position position="247"/>
    </location>
    <ligand>
        <name>ATP</name>
        <dbReference type="ChEBI" id="CHEBI:30616"/>
        <label>1</label>
    </ligand>
</feature>
<feature type="binding site" evidence="1">
    <location>
        <position position="248"/>
    </location>
    <ligand>
        <name>ATP</name>
        <dbReference type="ChEBI" id="CHEBI:30616"/>
        <label>1</label>
    </ligand>
</feature>
<feature type="binding site" evidence="1">
    <location>
        <position position="290"/>
    </location>
    <ligand>
        <name>ATP</name>
        <dbReference type="ChEBI" id="CHEBI:30616"/>
        <label>1</label>
    </ligand>
</feature>
<feature type="binding site" evidence="1">
    <location>
        <position position="290"/>
    </location>
    <ligand>
        <name>Mg(2+)</name>
        <dbReference type="ChEBI" id="CHEBI:18420"/>
        <label>1</label>
    </ligand>
</feature>
<feature type="binding site" evidence="1">
    <location>
        <position position="290"/>
    </location>
    <ligand>
        <name>Mn(2+)</name>
        <dbReference type="ChEBI" id="CHEBI:29035"/>
        <label>1</label>
    </ligand>
</feature>
<feature type="binding site" evidence="1">
    <location>
        <position position="304"/>
    </location>
    <ligand>
        <name>ATP</name>
        <dbReference type="ChEBI" id="CHEBI:30616"/>
        <label>1</label>
    </ligand>
</feature>
<feature type="binding site" evidence="1">
    <location>
        <position position="304"/>
    </location>
    <ligand>
        <name>Mg(2+)</name>
        <dbReference type="ChEBI" id="CHEBI:18420"/>
        <label>1</label>
    </ligand>
</feature>
<feature type="binding site" evidence="1">
    <location>
        <position position="304"/>
    </location>
    <ligand>
        <name>Mg(2+)</name>
        <dbReference type="ChEBI" id="CHEBI:18420"/>
        <label>2</label>
    </ligand>
</feature>
<feature type="binding site" evidence="1">
    <location>
        <position position="304"/>
    </location>
    <ligand>
        <name>Mn(2+)</name>
        <dbReference type="ChEBI" id="CHEBI:29035"/>
        <label>1</label>
    </ligand>
</feature>
<feature type="binding site" evidence="1">
    <location>
        <position position="304"/>
    </location>
    <ligand>
        <name>Mn(2+)</name>
        <dbReference type="ChEBI" id="CHEBI:29035"/>
        <label>2</label>
    </ligand>
</feature>
<feature type="binding site" evidence="1">
    <location>
        <position position="306"/>
    </location>
    <ligand>
        <name>Mg(2+)</name>
        <dbReference type="ChEBI" id="CHEBI:18420"/>
        <label>2</label>
    </ligand>
</feature>
<feature type="binding site" evidence="1">
    <location>
        <position position="306"/>
    </location>
    <ligand>
        <name>Mn(2+)</name>
        <dbReference type="ChEBI" id="CHEBI:29035"/>
        <label>2</label>
    </ligand>
</feature>
<feature type="binding site" evidence="1">
    <location>
        <position position="729"/>
    </location>
    <ligand>
        <name>ATP</name>
        <dbReference type="ChEBI" id="CHEBI:30616"/>
        <label>2</label>
    </ligand>
</feature>
<feature type="binding site" evidence="1">
    <location>
        <position position="768"/>
    </location>
    <ligand>
        <name>ATP</name>
        <dbReference type="ChEBI" id="CHEBI:30616"/>
        <label>2</label>
    </ligand>
</feature>
<feature type="binding site" evidence="1">
    <location>
        <position position="770"/>
    </location>
    <ligand>
        <name>ATP</name>
        <dbReference type="ChEBI" id="CHEBI:30616"/>
        <label>2</label>
    </ligand>
</feature>
<feature type="binding site" evidence="1">
    <location>
        <position position="775"/>
    </location>
    <ligand>
        <name>ATP</name>
        <dbReference type="ChEBI" id="CHEBI:30616"/>
        <label>2</label>
    </ligand>
</feature>
<feature type="binding site" evidence="1">
    <location>
        <position position="800"/>
    </location>
    <ligand>
        <name>ATP</name>
        <dbReference type="ChEBI" id="CHEBI:30616"/>
        <label>2</label>
    </ligand>
</feature>
<feature type="binding site" evidence="1">
    <location>
        <position position="801"/>
    </location>
    <ligand>
        <name>ATP</name>
        <dbReference type="ChEBI" id="CHEBI:30616"/>
        <label>2</label>
    </ligand>
</feature>
<feature type="binding site" evidence="1">
    <location>
        <position position="802"/>
    </location>
    <ligand>
        <name>ATP</name>
        <dbReference type="ChEBI" id="CHEBI:30616"/>
        <label>2</label>
    </ligand>
</feature>
<feature type="binding site" evidence="1">
    <location>
        <position position="803"/>
    </location>
    <ligand>
        <name>ATP</name>
        <dbReference type="ChEBI" id="CHEBI:30616"/>
        <label>2</label>
    </ligand>
</feature>
<feature type="binding site" evidence="1">
    <location>
        <position position="843"/>
    </location>
    <ligand>
        <name>ATP</name>
        <dbReference type="ChEBI" id="CHEBI:30616"/>
        <label>2</label>
    </ligand>
</feature>
<feature type="binding site" evidence="1">
    <location>
        <position position="843"/>
    </location>
    <ligand>
        <name>Mg(2+)</name>
        <dbReference type="ChEBI" id="CHEBI:18420"/>
        <label>3</label>
    </ligand>
</feature>
<feature type="binding site" evidence="1">
    <location>
        <position position="843"/>
    </location>
    <ligand>
        <name>Mn(2+)</name>
        <dbReference type="ChEBI" id="CHEBI:29035"/>
        <label>3</label>
    </ligand>
</feature>
<feature type="binding site" evidence="1">
    <location>
        <position position="855"/>
    </location>
    <ligand>
        <name>ATP</name>
        <dbReference type="ChEBI" id="CHEBI:30616"/>
        <label>2</label>
    </ligand>
</feature>
<feature type="binding site" evidence="1">
    <location>
        <position position="855"/>
    </location>
    <ligand>
        <name>Mg(2+)</name>
        <dbReference type="ChEBI" id="CHEBI:18420"/>
        <label>3</label>
    </ligand>
</feature>
<feature type="binding site" evidence="1">
    <location>
        <position position="855"/>
    </location>
    <ligand>
        <name>Mg(2+)</name>
        <dbReference type="ChEBI" id="CHEBI:18420"/>
        <label>4</label>
    </ligand>
</feature>
<feature type="binding site" evidence="1">
    <location>
        <position position="855"/>
    </location>
    <ligand>
        <name>Mn(2+)</name>
        <dbReference type="ChEBI" id="CHEBI:29035"/>
        <label>3</label>
    </ligand>
</feature>
<feature type="binding site" evidence="1">
    <location>
        <position position="855"/>
    </location>
    <ligand>
        <name>Mn(2+)</name>
        <dbReference type="ChEBI" id="CHEBI:29035"/>
        <label>4</label>
    </ligand>
</feature>
<feature type="binding site" evidence="1">
    <location>
        <position position="857"/>
    </location>
    <ligand>
        <name>Mg(2+)</name>
        <dbReference type="ChEBI" id="CHEBI:18420"/>
        <label>4</label>
    </ligand>
</feature>
<feature type="binding site" evidence="1">
    <location>
        <position position="857"/>
    </location>
    <ligand>
        <name>Mn(2+)</name>
        <dbReference type="ChEBI" id="CHEBI:29035"/>
        <label>4</label>
    </ligand>
</feature>
<evidence type="ECO:0000255" key="1">
    <source>
        <dbReference type="HAMAP-Rule" id="MF_01210"/>
    </source>
</evidence>
<keyword id="KW-0028">Amino-acid biosynthesis</keyword>
<keyword id="KW-0055">Arginine biosynthesis</keyword>
<keyword id="KW-0067">ATP-binding</keyword>
<keyword id="KW-0436">Ligase</keyword>
<keyword id="KW-0460">Magnesium</keyword>
<keyword id="KW-0464">Manganese</keyword>
<keyword id="KW-0479">Metal-binding</keyword>
<keyword id="KW-0547">Nucleotide-binding</keyword>
<keyword id="KW-0665">Pyrimidine biosynthesis</keyword>
<keyword id="KW-0677">Repeat</keyword>
<name>CARB_MYCSJ</name>
<comment type="function">
    <text evidence="1">Large subunit of the glutamine-dependent carbamoyl phosphate synthetase (CPSase). CPSase catalyzes the formation of carbamoyl phosphate from the ammonia moiety of glutamine, carbonate, and phosphate donated by ATP, constituting the first step of 2 biosynthetic pathways, one leading to arginine and/or urea and the other to pyrimidine nucleotides. The large subunit (synthetase) binds the substrates ammonia (free or transferred from glutamine from the small subunit), hydrogencarbonate and ATP and carries out an ATP-coupled ligase reaction, activating hydrogencarbonate by forming carboxy phosphate which reacts with ammonia to form carbamoyl phosphate.</text>
</comment>
<comment type="catalytic activity">
    <reaction evidence="1">
        <text>hydrogencarbonate + L-glutamine + 2 ATP + H2O = carbamoyl phosphate + L-glutamate + 2 ADP + phosphate + 2 H(+)</text>
        <dbReference type="Rhea" id="RHEA:18633"/>
        <dbReference type="ChEBI" id="CHEBI:15377"/>
        <dbReference type="ChEBI" id="CHEBI:15378"/>
        <dbReference type="ChEBI" id="CHEBI:17544"/>
        <dbReference type="ChEBI" id="CHEBI:29985"/>
        <dbReference type="ChEBI" id="CHEBI:30616"/>
        <dbReference type="ChEBI" id="CHEBI:43474"/>
        <dbReference type="ChEBI" id="CHEBI:58228"/>
        <dbReference type="ChEBI" id="CHEBI:58359"/>
        <dbReference type="ChEBI" id="CHEBI:456216"/>
        <dbReference type="EC" id="6.3.5.5"/>
    </reaction>
</comment>
<comment type="catalytic activity">
    <molecule>Carbamoyl phosphate synthase large chain</molecule>
    <reaction evidence="1">
        <text>hydrogencarbonate + NH4(+) + 2 ATP = carbamoyl phosphate + 2 ADP + phosphate + 2 H(+)</text>
        <dbReference type="Rhea" id="RHEA:18029"/>
        <dbReference type="ChEBI" id="CHEBI:15378"/>
        <dbReference type="ChEBI" id="CHEBI:17544"/>
        <dbReference type="ChEBI" id="CHEBI:28938"/>
        <dbReference type="ChEBI" id="CHEBI:30616"/>
        <dbReference type="ChEBI" id="CHEBI:43474"/>
        <dbReference type="ChEBI" id="CHEBI:58228"/>
        <dbReference type="ChEBI" id="CHEBI:456216"/>
        <dbReference type="EC" id="6.3.4.16"/>
    </reaction>
</comment>
<comment type="cofactor">
    <cofactor evidence="1">
        <name>Mg(2+)</name>
        <dbReference type="ChEBI" id="CHEBI:18420"/>
    </cofactor>
    <cofactor evidence="1">
        <name>Mn(2+)</name>
        <dbReference type="ChEBI" id="CHEBI:29035"/>
    </cofactor>
    <text evidence="1">Binds 4 Mg(2+) or Mn(2+) ions per subunit.</text>
</comment>
<comment type="pathway">
    <text evidence="1">Amino-acid biosynthesis; L-arginine biosynthesis; carbamoyl phosphate from bicarbonate: step 1/1.</text>
</comment>
<comment type="pathway">
    <text evidence="1">Pyrimidine metabolism; UMP biosynthesis via de novo pathway; (S)-dihydroorotate from bicarbonate: step 1/3.</text>
</comment>
<comment type="subunit">
    <text evidence="1">Composed of two chains; the small (or glutamine) chain promotes the hydrolysis of glutamine to ammonia, which is used by the large (or ammonia) chain to synthesize carbamoyl phosphate. Tetramer of heterodimers (alpha,beta)4.</text>
</comment>
<comment type="domain">
    <text evidence="1">The large subunit is composed of 2 ATP-grasp domains that are involved in binding the 2 ATP molecules needed for carbamoyl phosphate synthesis. The N-terminal ATP-grasp domain (referred to as the carboxyphosphate synthetic component) catalyzes the ATP-dependent phosphorylation of hydrogencarbonate to carboxyphosphate and the subsequent nucleophilic attack by ammonia to form a carbamate intermediate. The C-terminal ATP-grasp domain (referred to as the carbamoyl phosphate synthetic component) then catalyzes the phosphorylation of carbamate with the second ATP to form the end product carbamoyl phosphate. The reactive and unstable enzyme intermediates are sequentially channeled from one active site to the next through the interior of the protein over a distance of at least 96 A.</text>
</comment>
<comment type="similarity">
    <text evidence="1">Belongs to the CarB family.</text>
</comment>
<protein>
    <recommendedName>
        <fullName evidence="1">Carbamoyl phosphate synthase large chain</fullName>
        <ecNumber evidence="1">6.3.4.16</ecNumber>
        <ecNumber evidence="1">6.3.5.5</ecNumber>
    </recommendedName>
    <alternativeName>
        <fullName evidence="1">Carbamoyl phosphate synthetase ammonia chain</fullName>
    </alternativeName>
</protein>
<sequence length="1112" mass="118976">MPRRTDLRHVLVIGSGPILIGQAAEFDYSGTQACRVLRAEGLTVTLINSNPATIMTDPEYADYTYVEPITPDFVERVIAQQAERGNKIDALLATLGGQTALNTAVALSENGVLERYDVELIGADFDAIQRGEDRQRFKDIVTKVGGESAKSRVCFTMEEVRETVGELGLPVVVRPSFTMGGLGSGMAYSAEDVERMAGHGLASSPSANVLIEESIFGWKEYELELMRDRHDNVVVVCSIENFDPMGVHTGDSVTVAPAMTLTDREYQTMRDLGIAILREVGVATGGCNIQFAVNPKDGRLIVIEMNPRVSRSSALASKATGFPIAKIAAKLAIGYTLDEILNDITKETPACFEPTLDYVVVKAPRFAFEKFPGADATLTTTMKSVGEAMSLGRNFIEALGKVMRSLETGRAGFWTAPDPIATVDEVLENLRTPTDGRLYDIEFALRLGASVEQVAEASGVDPWFVDQIAGLVALRTELLDAPVLDGTLLRRAKNSGLSDRQIAALRPELAGEVGVRALRQRLGIHPVFKTVDTCAAEFEAKTPYHYSSYELDPAAESEVAPQAERPKVLILGSGPNRIGQGIEFDYSCVHAATTLSEAGFETVMINCNPETVSTDYDTADRLYFEPLTFEDVLEIYYAESASGAGGPGVAGVIVQLGGQTPLGLAERLEQAGVPIVGTSPKAIDLAEDRGAFGEVLRTAGLPAPRFGLATTFDQARRIAADIGYPVLVRPSYVLGGRGMEIVYDEQTLEGYITRATQLSPEHPVLVDRFLEDAIEIDVDALCDGTEVYIGGIMEHIEEAGIHSGDSACALPPVTLGRSDIESVRRATEAIAHGVGVVGLLNVQYALKDDVLYVLEANPRASRTVPFVSKATAVPLAKACARIMLGASIAQLREEGVLAATGDGATTARNAPVAVKEAVLPFHRFRKADGAQIDSLLGPEMKSTGEVMGIDHDFGSAFAKSQTAAYGSLPSEGTVFVSVANRDKRSLVFPVKRLADLGFKVLATEGTAEMLRRNGIPCDEVRKHFEEPGAGRPARSAVEAIRAGDVAMVINTPYGNSGPRIDGYEIRSAAVSMNIPCITTVQGASAAVQGIEASLRGDIGVMSLQELHSELGN</sequence>
<organism>
    <name type="scientific">Mycobacterium sp. (strain JLS)</name>
    <dbReference type="NCBI Taxonomy" id="164757"/>
    <lineage>
        <taxon>Bacteria</taxon>
        <taxon>Bacillati</taxon>
        <taxon>Actinomycetota</taxon>
        <taxon>Actinomycetes</taxon>
        <taxon>Mycobacteriales</taxon>
        <taxon>Mycobacteriaceae</taxon>
        <taxon>Mycobacterium</taxon>
    </lineage>
</organism>